<feature type="chain" id="PRO_0000451821" description="RNA-binding protein VTS1">
    <location>
        <begin position="1"/>
        <end position="687"/>
    </location>
</feature>
<feature type="domain" description="SAM" evidence="2">
    <location>
        <begin position="606"/>
        <end position="667"/>
    </location>
</feature>
<feature type="region of interest" description="Disordered" evidence="3">
    <location>
        <begin position="1"/>
        <end position="115"/>
    </location>
</feature>
<feature type="region of interest" description="Disordered" evidence="3">
    <location>
        <begin position="248"/>
        <end position="341"/>
    </location>
</feature>
<feature type="region of interest" description="Disordered" evidence="3">
    <location>
        <begin position="526"/>
        <end position="598"/>
    </location>
</feature>
<feature type="compositionally biased region" description="Basic residues" evidence="3">
    <location>
        <begin position="1"/>
        <end position="10"/>
    </location>
</feature>
<feature type="compositionally biased region" description="Polar residues" evidence="3">
    <location>
        <begin position="29"/>
        <end position="41"/>
    </location>
</feature>
<feature type="compositionally biased region" description="Low complexity" evidence="3">
    <location>
        <begin position="52"/>
        <end position="68"/>
    </location>
</feature>
<feature type="compositionally biased region" description="Polar residues" evidence="3">
    <location>
        <begin position="287"/>
        <end position="301"/>
    </location>
</feature>
<feature type="compositionally biased region" description="Basic and acidic residues" evidence="3">
    <location>
        <begin position="305"/>
        <end position="324"/>
    </location>
</feature>
<feature type="compositionally biased region" description="Polar residues" evidence="3">
    <location>
        <begin position="526"/>
        <end position="539"/>
    </location>
</feature>
<feature type="compositionally biased region" description="Low complexity" evidence="3">
    <location>
        <begin position="550"/>
        <end position="566"/>
    </location>
</feature>
<feature type="compositionally biased region" description="Gly residues" evidence="3">
    <location>
        <begin position="585"/>
        <end position="597"/>
    </location>
</feature>
<accession>J9VVN9</accession>
<sequence length="687" mass="72547">MASHTLRPHRSPSPSPEPPVNLANPAKLTRQSLGPPTSGNSKGFGSLGLGPGLASPSSPSQPRHVSSSVAMGMGNRDSLSPRPSGVGSGRAVSATTGPRPSSEFIPTREAKTPEAEQIDQWFKHLANWEATLEEMAAASTDQNFTEELGAIEQWFRVLSEAERTAALYSLLQYSTPVQIRFFISVLHHMSQSDPMSALLSPSLSGSNAFQTQVESKLSNMNLKSPSAGGGAGFAGSSGNGHYLAPDDAAAKAAKARQNRISAPGTLQPHDRWQGQLDQVVERGTSPGLESNMSGRSRSKSPTPEPRPKSTDFSGKPRESLRRESAAFPRSPRVSAGSPGIGLGIGHESPMASPFGNNASWASMVNTPLVQNFNDGKLVAPASVADLSQALNMATLQLNNPGYLPLDDARKYRRPTGGLASGQTSRNVSGQYNDDGEIVNPHTTQPGTPSGLLPNQFGGGRSPLVDQFGLGGLGIGADSTTLANLGLNYNLAGLGGVNPGLNGLTAAQAQAAQMLAMQQQLQNSQYSPFNASAPSLQPGLNPSRRGAGRGQSSHLNQHYNQHQQQHQPGRRSPNPLKSHSPAPGQQTGGGGAGGGAGVAGPEDVDVKVLEDVPNWLRVLRLHKYTPNFEKSNWNDMVLMTDQDLQDNGISAQGARTKFLKVFYNVRTKMDIAHPPGQEEYAPGPKESK</sequence>
<comment type="function">
    <text evidence="1">RNA-binding protein involved in post-transcriptional regulation through transcript degradation.</text>
</comment>
<comment type="subunit">
    <text evidence="1">Monomer. Binds to RNA.</text>
</comment>
<comment type="subcellular location">
    <subcellularLocation>
        <location evidence="1">Cytoplasm</location>
        <location evidence="1">Cytosol</location>
    </subcellularLocation>
    <subcellularLocation>
        <location evidence="4">Cytoplasm</location>
        <location evidence="4">P-body</location>
    </subcellularLocation>
    <text evidence="4">Localizes to P-bodies at high temperature.</text>
</comment>
<comment type="similarity">
    <text evidence="5">Belongs to the VTS1 family.</text>
</comment>
<evidence type="ECO:0000250" key="1">
    <source>
        <dbReference type="UniProtKB" id="Q08831"/>
    </source>
</evidence>
<evidence type="ECO:0000255" key="2">
    <source>
        <dbReference type="PROSITE-ProRule" id="PRU00184"/>
    </source>
</evidence>
<evidence type="ECO:0000256" key="3">
    <source>
        <dbReference type="SAM" id="MobiDB-lite"/>
    </source>
</evidence>
<evidence type="ECO:0000269" key="4">
    <source>
    </source>
</evidence>
<evidence type="ECO:0000305" key="5"/>
<evidence type="ECO:0000312" key="6">
    <source>
        <dbReference type="EMBL" id="AFR98328.1"/>
    </source>
</evidence>
<evidence type="ECO:0000312" key="7">
    <source>
        <dbReference type="Proteomes" id="UP000010091"/>
    </source>
</evidence>
<protein>
    <recommendedName>
        <fullName evidence="5">RNA-binding protein VTS1</fullName>
    </recommendedName>
</protein>
<proteinExistence type="evidence at protein level"/>
<keyword id="KW-0963">Cytoplasm</keyword>
<keyword id="KW-0694">RNA-binding</keyword>
<keyword id="KW-0810">Translation regulation</keyword>
<organism evidence="7">
    <name type="scientific">Cryptococcus neoformans var. grubii serotype A (strain H99 / ATCC 208821 / CBS 10515 / FGSC 9487)</name>
    <name type="common">Filobasidiella neoformans var. grubii</name>
    <dbReference type="NCBI Taxonomy" id="235443"/>
    <lineage>
        <taxon>Eukaryota</taxon>
        <taxon>Fungi</taxon>
        <taxon>Dikarya</taxon>
        <taxon>Basidiomycota</taxon>
        <taxon>Agaricomycotina</taxon>
        <taxon>Tremellomycetes</taxon>
        <taxon>Tremellales</taxon>
        <taxon>Cryptococcaceae</taxon>
        <taxon>Cryptococcus</taxon>
        <taxon>Cryptococcus neoformans species complex</taxon>
    </lineage>
</organism>
<gene>
    <name evidence="5" type="primary">VTS1</name>
    <name evidence="5" type="synonym">RBP1</name>
    <name evidence="6" type="ORF">CNAG_06103</name>
</gene>
<name>VTS1_CRYNH</name>
<dbReference type="EMBL" id="CP003831">
    <property type="protein sequence ID" value="AFR98328.1"/>
    <property type="molecule type" value="Genomic_DNA"/>
</dbReference>
<dbReference type="RefSeq" id="XP_012053135.1">
    <property type="nucleotide sequence ID" value="XM_012197745.1"/>
</dbReference>
<dbReference type="SMR" id="J9VVN9"/>
<dbReference type="GeneID" id="23889341"/>
<dbReference type="KEGG" id="cng:CNAG_06103"/>
<dbReference type="VEuPathDB" id="FungiDB:CNAG_06103"/>
<dbReference type="HOGENOM" id="CLU_017632_1_0_1"/>
<dbReference type="OrthoDB" id="8697at5206"/>
<dbReference type="Proteomes" id="UP000010091">
    <property type="component" value="Chromosome 12"/>
</dbReference>
<dbReference type="GO" id="GO:0005829">
    <property type="term" value="C:cytosol"/>
    <property type="evidence" value="ECO:0007669"/>
    <property type="project" value="UniProtKB-SubCell"/>
</dbReference>
<dbReference type="GO" id="GO:0000932">
    <property type="term" value="C:P-body"/>
    <property type="evidence" value="ECO:0000314"/>
    <property type="project" value="UniProtKB"/>
</dbReference>
<dbReference type="GO" id="GO:0003729">
    <property type="term" value="F:mRNA binding"/>
    <property type="evidence" value="ECO:0007669"/>
    <property type="project" value="InterPro"/>
</dbReference>
<dbReference type="GO" id="GO:0000289">
    <property type="term" value="P:nuclear-transcribed mRNA poly(A) tail shortening"/>
    <property type="evidence" value="ECO:0000266"/>
    <property type="project" value="UniProtKB"/>
</dbReference>
<dbReference type="GO" id="GO:0006417">
    <property type="term" value="P:regulation of translation"/>
    <property type="evidence" value="ECO:0007669"/>
    <property type="project" value="UniProtKB-KW"/>
</dbReference>
<dbReference type="CDD" id="cd09556">
    <property type="entry name" value="SAM_VTS1_fungal"/>
    <property type="match status" value="1"/>
</dbReference>
<dbReference type="Gene3D" id="1.10.150.50">
    <property type="entry name" value="Transcription Factor, Ets-1"/>
    <property type="match status" value="1"/>
</dbReference>
<dbReference type="InterPro" id="IPR001660">
    <property type="entry name" value="SAM"/>
</dbReference>
<dbReference type="InterPro" id="IPR013761">
    <property type="entry name" value="SAM/pointed_sf"/>
</dbReference>
<dbReference type="InterPro" id="IPR050897">
    <property type="entry name" value="SMAUG/VTS1_RNA-bind"/>
</dbReference>
<dbReference type="InterPro" id="IPR037635">
    <property type="entry name" value="VTS1_SAM"/>
</dbReference>
<dbReference type="PANTHER" id="PTHR12515:SF5">
    <property type="entry name" value="PROTEIN SMAUG"/>
    <property type="match status" value="1"/>
</dbReference>
<dbReference type="PANTHER" id="PTHR12515">
    <property type="entry name" value="STERILE ALPHA MOTIF DOMAIN CONTAINING PROTEIN 4-RELATED"/>
    <property type="match status" value="1"/>
</dbReference>
<dbReference type="Pfam" id="PF07647">
    <property type="entry name" value="SAM_2"/>
    <property type="match status" value="1"/>
</dbReference>
<dbReference type="Pfam" id="PF25479">
    <property type="entry name" value="Vts1"/>
    <property type="match status" value="1"/>
</dbReference>
<dbReference type="SMART" id="SM00454">
    <property type="entry name" value="SAM"/>
    <property type="match status" value="1"/>
</dbReference>
<dbReference type="SUPFAM" id="SSF47769">
    <property type="entry name" value="SAM/Pointed domain"/>
    <property type="match status" value="1"/>
</dbReference>
<dbReference type="PROSITE" id="PS50105">
    <property type="entry name" value="SAM_DOMAIN"/>
    <property type="match status" value="1"/>
</dbReference>
<reference evidence="7" key="1">
    <citation type="journal article" date="2014" name="PLoS Genet.">
        <title>Analysis of the genome and transcriptome of Cryptococcus neoformans var. grubii reveals complex RNA expression and microevolution leading to virulence attenuation.</title>
        <authorList>
            <person name="Janbon G."/>
            <person name="Ormerod K.L."/>
            <person name="Paulet D."/>
            <person name="Byrnes E.J. III"/>
            <person name="Yadav V."/>
            <person name="Chatterjee G."/>
            <person name="Mullapudi N."/>
            <person name="Hon C.-C."/>
            <person name="Billmyre R.B."/>
            <person name="Brunel F."/>
            <person name="Bahn Y.-S."/>
            <person name="Chen W."/>
            <person name="Chen Y."/>
            <person name="Chow E.W.L."/>
            <person name="Coppee J.-Y."/>
            <person name="Floyd-Averette A."/>
            <person name="Gaillardin C."/>
            <person name="Gerik K.J."/>
            <person name="Goldberg J."/>
            <person name="Gonzalez-Hilarion S."/>
            <person name="Gujja S."/>
            <person name="Hamlin J.L."/>
            <person name="Hsueh Y.-P."/>
            <person name="Ianiri G."/>
            <person name="Jones S."/>
            <person name="Kodira C.D."/>
            <person name="Kozubowski L."/>
            <person name="Lam W."/>
            <person name="Marra M."/>
            <person name="Mesner L.D."/>
            <person name="Mieczkowski P.A."/>
            <person name="Moyrand F."/>
            <person name="Nielsen K."/>
            <person name="Proux C."/>
            <person name="Rossignol T."/>
            <person name="Schein J.E."/>
            <person name="Sun S."/>
            <person name="Wollschlaeger C."/>
            <person name="Wood I.A."/>
            <person name="Zeng Q."/>
            <person name="Neuveglise C."/>
            <person name="Newlon C.S."/>
            <person name="Perfect J.R."/>
            <person name="Lodge J.K."/>
            <person name="Idnurm A."/>
            <person name="Stajich J.E."/>
            <person name="Kronstad J.W."/>
            <person name="Sanyal K."/>
            <person name="Heitman J."/>
            <person name="Fraser J.A."/>
            <person name="Cuomo C.A."/>
            <person name="Dietrich F.S."/>
        </authorList>
    </citation>
    <scope>NUCLEOTIDE SEQUENCE [LARGE SCALE GENOMIC DNA]</scope>
    <source>
        <strain>H99 / ATCC 208821 / CBS 10515 / FGSC 9487</strain>
    </source>
</reference>
<reference evidence="5" key="2">
    <citation type="journal article" date="2016" name="PLoS Pathog.">
        <title>Calcineurin Targets Involved in Stress Survival and Fungal Virulence.</title>
        <authorList>
            <person name="Park H.S."/>
            <person name="Chow E.W."/>
            <person name="Fu C."/>
            <person name="Soderblom E.J."/>
            <person name="Moseley M.A."/>
            <person name="Heitman J."/>
            <person name="Cardenas M.E."/>
        </authorList>
    </citation>
    <scope>IDENTIFICATION BY MASS SPECTROMETRY</scope>
    <scope>SUBCELLULAR LOCATION</scope>
</reference>